<organism>
    <name type="scientific">Yarrowia lipolytica (strain CLIB 122 / E 150)</name>
    <name type="common">Yeast</name>
    <name type="synonym">Candida lipolytica</name>
    <dbReference type="NCBI Taxonomy" id="284591"/>
    <lineage>
        <taxon>Eukaryota</taxon>
        <taxon>Fungi</taxon>
        <taxon>Dikarya</taxon>
        <taxon>Ascomycota</taxon>
        <taxon>Saccharomycotina</taxon>
        <taxon>Dipodascomycetes</taxon>
        <taxon>Dipodascales</taxon>
        <taxon>Dipodascales incertae sedis</taxon>
        <taxon>Yarrowia</taxon>
    </lineage>
</organism>
<evidence type="ECO:0000250" key="1"/>
<evidence type="ECO:0000255" key="2">
    <source>
        <dbReference type="PROSITE-ProRule" id="PRU00541"/>
    </source>
</evidence>
<evidence type="ECO:0000255" key="3">
    <source>
        <dbReference type="PROSITE-ProRule" id="PRU00542"/>
    </source>
</evidence>
<evidence type="ECO:0000305" key="4"/>
<accession>Q6C347</accession>
<proteinExistence type="inferred from homology"/>
<sequence>MAEFDRDLDDELEFKTSKDVDVTPTFESMDLKDDLLRGIYAYGFEAPSAIQSRAITQIIKGRDTIAQAQSGTGKTATFSISMLEVIDTKHRETQAMVLSPTRELATQIQSVILALGDYMNVQCHACIGGTSLSVDMKKLEAGQQVVSGTPGRCLDMIKKGCLRTKNLKMLILDEADELLNKGFQEQIYDIYRYLPAATQVVVVSATLPHSVLEMTSKFMTDPVRILVKRDELTLEGLKQYFIAVEQEEWKFDTLCDLYDTLTITQAVIFCNTKKKVDWLTQQMKDNNFTVCSMHGDMAQKDRDSIMNEFRSGRSRVLISTDVWARGIDVQQVSLVINYDLPPNRENYIHRIGRSGRFGRKGVAINFATNDDITTLRDIEQYYSTQIDEMPVNVTDMM</sequence>
<keyword id="KW-0067">ATP-binding</keyword>
<keyword id="KW-0347">Helicase</keyword>
<keyword id="KW-0378">Hydrolase</keyword>
<keyword id="KW-0547">Nucleotide-binding</keyword>
<keyword id="KW-0539">Nucleus</keyword>
<keyword id="KW-1185">Reference proteome</keyword>
<keyword id="KW-0690">Ribosome biogenesis</keyword>
<keyword id="KW-0694">RNA-binding</keyword>
<keyword id="KW-0698">rRNA processing</keyword>
<comment type="function">
    <text evidence="1">ATP-dependent RNA helicase involved in 40S ribosomal subunit biogenesis. Required for the processing and cleavage of 35S pre-rRNA at sites A0, A1, and A2, leading to mature 18S rRNA (By similarity).</text>
</comment>
<comment type="catalytic activity">
    <reaction>
        <text>ATP + H2O = ADP + phosphate + H(+)</text>
        <dbReference type="Rhea" id="RHEA:13065"/>
        <dbReference type="ChEBI" id="CHEBI:15377"/>
        <dbReference type="ChEBI" id="CHEBI:15378"/>
        <dbReference type="ChEBI" id="CHEBI:30616"/>
        <dbReference type="ChEBI" id="CHEBI:43474"/>
        <dbReference type="ChEBI" id="CHEBI:456216"/>
        <dbReference type="EC" id="3.6.4.13"/>
    </reaction>
</comment>
<comment type="subcellular location">
    <subcellularLocation>
        <location evidence="1">Nucleus</location>
        <location evidence="1">Nucleolus</location>
    </subcellularLocation>
</comment>
<comment type="domain">
    <text>The Q motif is unique to and characteristic of the DEAD box family of RNA helicases and controls ATP binding and hydrolysis.</text>
</comment>
<comment type="similarity">
    <text evidence="4">Belongs to the DEAD box helicase family. DDX48/FAL1 subfamily.</text>
</comment>
<gene>
    <name type="primary">FAL1</name>
    <name type="ordered locus">YALI0F02695g</name>
</gene>
<dbReference type="EC" id="3.6.4.13"/>
<dbReference type="EMBL" id="CR382132">
    <property type="protein sequence ID" value="CAG77720.1"/>
    <property type="molecule type" value="Genomic_DNA"/>
</dbReference>
<dbReference type="RefSeq" id="XP_504915.1">
    <property type="nucleotide sequence ID" value="XM_504915.1"/>
</dbReference>
<dbReference type="SMR" id="Q6C347"/>
<dbReference type="FunCoup" id="Q6C347">
    <property type="interactions" value="693"/>
</dbReference>
<dbReference type="STRING" id="284591.Q6C347"/>
<dbReference type="EnsemblFungi" id="CAG77720">
    <property type="protein sequence ID" value="CAG77720"/>
    <property type="gene ID" value="YALI0_F02695g"/>
</dbReference>
<dbReference type="KEGG" id="yli:2907785"/>
<dbReference type="VEuPathDB" id="FungiDB:YALI0_F02695g"/>
<dbReference type="HOGENOM" id="CLU_003041_1_0_1"/>
<dbReference type="InParanoid" id="Q6C347"/>
<dbReference type="OMA" id="TRFHDFK"/>
<dbReference type="OrthoDB" id="84407at4891"/>
<dbReference type="Proteomes" id="UP000001300">
    <property type="component" value="Chromosome F"/>
</dbReference>
<dbReference type="GO" id="GO:0071013">
    <property type="term" value="C:catalytic step 2 spliceosome"/>
    <property type="evidence" value="ECO:0000318"/>
    <property type="project" value="GO_Central"/>
</dbReference>
<dbReference type="GO" id="GO:0097078">
    <property type="term" value="C:FAL1-SGD1 complex"/>
    <property type="evidence" value="ECO:0007669"/>
    <property type="project" value="EnsemblFungi"/>
</dbReference>
<dbReference type="GO" id="GO:0005730">
    <property type="term" value="C:nucleolus"/>
    <property type="evidence" value="ECO:0000318"/>
    <property type="project" value="GO_Central"/>
</dbReference>
<dbReference type="GO" id="GO:0030688">
    <property type="term" value="C:preribosome, small subunit precursor"/>
    <property type="evidence" value="ECO:0007669"/>
    <property type="project" value="EnsemblFungi"/>
</dbReference>
<dbReference type="GO" id="GO:0032040">
    <property type="term" value="C:small-subunit processome"/>
    <property type="evidence" value="ECO:0007669"/>
    <property type="project" value="EnsemblFungi"/>
</dbReference>
<dbReference type="GO" id="GO:0005524">
    <property type="term" value="F:ATP binding"/>
    <property type="evidence" value="ECO:0007669"/>
    <property type="project" value="UniProtKB-KW"/>
</dbReference>
<dbReference type="GO" id="GO:0016887">
    <property type="term" value="F:ATP hydrolysis activity"/>
    <property type="evidence" value="ECO:0007669"/>
    <property type="project" value="RHEA"/>
</dbReference>
<dbReference type="GO" id="GO:0003729">
    <property type="term" value="F:mRNA binding"/>
    <property type="evidence" value="ECO:0000318"/>
    <property type="project" value="GO_Central"/>
</dbReference>
<dbReference type="GO" id="GO:0003724">
    <property type="term" value="F:RNA helicase activity"/>
    <property type="evidence" value="ECO:0000318"/>
    <property type="project" value="GO_Central"/>
</dbReference>
<dbReference type="GO" id="GO:0000462">
    <property type="term" value="P:maturation of SSU-rRNA from tricistronic rRNA transcript (SSU-rRNA, 5.8S rRNA, LSU-rRNA)"/>
    <property type="evidence" value="ECO:0007669"/>
    <property type="project" value="EnsemblFungi"/>
</dbReference>
<dbReference type="GO" id="GO:0000398">
    <property type="term" value="P:mRNA splicing, via spliceosome"/>
    <property type="evidence" value="ECO:0000318"/>
    <property type="project" value="GO_Central"/>
</dbReference>
<dbReference type="CDD" id="cd18045">
    <property type="entry name" value="DEADc_EIF4AIII_DDX48"/>
    <property type="match status" value="1"/>
</dbReference>
<dbReference type="CDD" id="cd18787">
    <property type="entry name" value="SF2_C_DEAD"/>
    <property type="match status" value="1"/>
</dbReference>
<dbReference type="FunFam" id="3.40.50.300:FF:000849">
    <property type="entry name" value="ATP-dependent RNA helicase DBP5"/>
    <property type="match status" value="1"/>
</dbReference>
<dbReference type="FunFam" id="3.40.50.300:FF:000031">
    <property type="entry name" value="Eukaryotic initiation factor 4A-III"/>
    <property type="match status" value="1"/>
</dbReference>
<dbReference type="Gene3D" id="3.40.50.300">
    <property type="entry name" value="P-loop containing nucleotide triphosphate hydrolases"/>
    <property type="match status" value="2"/>
</dbReference>
<dbReference type="InterPro" id="IPR011545">
    <property type="entry name" value="DEAD/DEAH_box_helicase_dom"/>
</dbReference>
<dbReference type="InterPro" id="IPR014001">
    <property type="entry name" value="Helicase_ATP-bd"/>
</dbReference>
<dbReference type="InterPro" id="IPR001650">
    <property type="entry name" value="Helicase_C-like"/>
</dbReference>
<dbReference type="InterPro" id="IPR027417">
    <property type="entry name" value="P-loop_NTPase"/>
</dbReference>
<dbReference type="InterPro" id="IPR000629">
    <property type="entry name" value="RNA-helicase_DEAD-box_CS"/>
</dbReference>
<dbReference type="InterPro" id="IPR014014">
    <property type="entry name" value="RNA_helicase_DEAD_Q_motif"/>
</dbReference>
<dbReference type="PANTHER" id="PTHR47958">
    <property type="entry name" value="ATP-DEPENDENT RNA HELICASE DBP3"/>
    <property type="match status" value="1"/>
</dbReference>
<dbReference type="Pfam" id="PF00270">
    <property type="entry name" value="DEAD"/>
    <property type="match status" value="1"/>
</dbReference>
<dbReference type="Pfam" id="PF00271">
    <property type="entry name" value="Helicase_C"/>
    <property type="match status" value="1"/>
</dbReference>
<dbReference type="SMART" id="SM00487">
    <property type="entry name" value="DEXDc"/>
    <property type="match status" value="1"/>
</dbReference>
<dbReference type="SMART" id="SM00490">
    <property type="entry name" value="HELICc"/>
    <property type="match status" value="1"/>
</dbReference>
<dbReference type="SUPFAM" id="SSF52540">
    <property type="entry name" value="P-loop containing nucleoside triphosphate hydrolases"/>
    <property type="match status" value="1"/>
</dbReference>
<dbReference type="PROSITE" id="PS00039">
    <property type="entry name" value="DEAD_ATP_HELICASE"/>
    <property type="match status" value="1"/>
</dbReference>
<dbReference type="PROSITE" id="PS51192">
    <property type="entry name" value="HELICASE_ATP_BIND_1"/>
    <property type="match status" value="1"/>
</dbReference>
<dbReference type="PROSITE" id="PS51194">
    <property type="entry name" value="HELICASE_CTER"/>
    <property type="match status" value="1"/>
</dbReference>
<dbReference type="PROSITE" id="PS51195">
    <property type="entry name" value="Q_MOTIF"/>
    <property type="match status" value="1"/>
</dbReference>
<name>FAL1_YARLI</name>
<feature type="chain" id="PRO_0000232152" description="ATP-dependent RNA helicase FAL1">
    <location>
        <begin position="1"/>
        <end position="397"/>
    </location>
</feature>
<feature type="domain" description="Helicase ATP-binding" evidence="2">
    <location>
        <begin position="55"/>
        <end position="225"/>
    </location>
</feature>
<feature type="domain" description="Helicase C-terminal" evidence="3">
    <location>
        <begin position="236"/>
        <end position="397"/>
    </location>
</feature>
<feature type="short sequence motif" description="Q motif">
    <location>
        <begin position="24"/>
        <end position="52"/>
    </location>
</feature>
<feature type="short sequence motif" description="DEAD box">
    <location>
        <begin position="173"/>
        <end position="176"/>
    </location>
</feature>
<feature type="binding site" evidence="2">
    <location>
        <begin position="68"/>
        <end position="75"/>
    </location>
    <ligand>
        <name>ATP</name>
        <dbReference type="ChEBI" id="CHEBI:30616"/>
    </ligand>
</feature>
<protein>
    <recommendedName>
        <fullName>ATP-dependent RNA helicase FAL1</fullName>
        <ecNumber>3.6.4.13</ecNumber>
    </recommendedName>
</protein>
<reference key="1">
    <citation type="journal article" date="2004" name="Nature">
        <title>Genome evolution in yeasts.</title>
        <authorList>
            <person name="Dujon B."/>
            <person name="Sherman D."/>
            <person name="Fischer G."/>
            <person name="Durrens P."/>
            <person name="Casaregola S."/>
            <person name="Lafontaine I."/>
            <person name="de Montigny J."/>
            <person name="Marck C."/>
            <person name="Neuveglise C."/>
            <person name="Talla E."/>
            <person name="Goffard N."/>
            <person name="Frangeul L."/>
            <person name="Aigle M."/>
            <person name="Anthouard V."/>
            <person name="Babour A."/>
            <person name="Barbe V."/>
            <person name="Barnay S."/>
            <person name="Blanchin S."/>
            <person name="Beckerich J.-M."/>
            <person name="Beyne E."/>
            <person name="Bleykasten C."/>
            <person name="Boisrame A."/>
            <person name="Boyer J."/>
            <person name="Cattolico L."/>
            <person name="Confanioleri F."/>
            <person name="de Daruvar A."/>
            <person name="Despons L."/>
            <person name="Fabre E."/>
            <person name="Fairhead C."/>
            <person name="Ferry-Dumazet H."/>
            <person name="Groppi A."/>
            <person name="Hantraye F."/>
            <person name="Hennequin C."/>
            <person name="Jauniaux N."/>
            <person name="Joyet P."/>
            <person name="Kachouri R."/>
            <person name="Kerrest A."/>
            <person name="Koszul R."/>
            <person name="Lemaire M."/>
            <person name="Lesur I."/>
            <person name="Ma L."/>
            <person name="Muller H."/>
            <person name="Nicaud J.-M."/>
            <person name="Nikolski M."/>
            <person name="Oztas S."/>
            <person name="Ozier-Kalogeropoulos O."/>
            <person name="Pellenz S."/>
            <person name="Potier S."/>
            <person name="Richard G.-F."/>
            <person name="Straub M.-L."/>
            <person name="Suleau A."/>
            <person name="Swennen D."/>
            <person name="Tekaia F."/>
            <person name="Wesolowski-Louvel M."/>
            <person name="Westhof E."/>
            <person name="Wirth B."/>
            <person name="Zeniou-Meyer M."/>
            <person name="Zivanovic Y."/>
            <person name="Bolotin-Fukuhara M."/>
            <person name="Thierry A."/>
            <person name="Bouchier C."/>
            <person name="Caudron B."/>
            <person name="Scarpelli C."/>
            <person name="Gaillardin C."/>
            <person name="Weissenbach J."/>
            <person name="Wincker P."/>
            <person name="Souciet J.-L."/>
        </authorList>
    </citation>
    <scope>NUCLEOTIDE SEQUENCE [LARGE SCALE GENOMIC DNA]</scope>
    <source>
        <strain>CLIB 122 / E 150</strain>
    </source>
</reference>